<accession>Q1Q8J2</accession>
<organism>
    <name type="scientific">Psychrobacter cryohalolentis (strain ATCC BAA-1226 / DSM 17306 / VKM B-2378 / K5)</name>
    <dbReference type="NCBI Taxonomy" id="335284"/>
    <lineage>
        <taxon>Bacteria</taxon>
        <taxon>Pseudomonadati</taxon>
        <taxon>Pseudomonadota</taxon>
        <taxon>Gammaproteobacteria</taxon>
        <taxon>Moraxellales</taxon>
        <taxon>Moraxellaceae</taxon>
        <taxon>Psychrobacter</taxon>
    </lineage>
</organism>
<reference key="1">
    <citation type="submission" date="2006-03" db="EMBL/GenBank/DDBJ databases">
        <title>Complete sequence of chromosome of Psychrobacter cryohalolentis K5.</title>
        <authorList>
            <consortium name="US DOE Joint Genome Institute"/>
            <person name="Copeland A."/>
            <person name="Lucas S."/>
            <person name="Lapidus A."/>
            <person name="Barry K."/>
            <person name="Detter J.C."/>
            <person name="Glavina T."/>
            <person name="Hammon N."/>
            <person name="Israni S."/>
            <person name="Dalin E."/>
            <person name="Tice H."/>
            <person name="Pitluck S."/>
            <person name="Brettin T."/>
            <person name="Bruce D."/>
            <person name="Han C."/>
            <person name="Tapia R."/>
            <person name="Sims D.R."/>
            <person name="Gilna P."/>
            <person name="Schmutz J."/>
            <person name="Larimer F."/>
            <person name="Land M."/>
            <person name="Hauser L."/>
            <person name="Kyrpides N."/>
            <person name="Kim E."/>
            <person name="Richardson P."/>
        </authorList>
    </citation>
    <scope>NUCLEOTIDE SEQUENCE [LARGE SCALE GENOMIC DNA]</scope>
    <source>
        <strain>ATCC BAA-1226 / DSM 17306 / VKM B-2378 / K5</strain>
    </source>
</reference>
<protein>
    <recommendedName>
        <fullName evidence="1">ATP-dependent Clp protease proteolytic subunit</fullName>
        <ecNumber evidence="1">3.4.21.92</ecNumber>
    </recommendedName>
    <alternativeName>
        <fullName evidence="1">Endopeptidase Clp</fullName>
    </alternativeName>
</protein>
<proteinExistence type="inferred from homology"/>
<dbReference type="EC" id="3.4.21.92" evidence="1"/>
<dbReference type="EMBL" id="CP000323">
    <property type="protein sequence ID" value="ABE76011.1"/>
    <property type="status" value="ALT_INIT"/>
    <property type="molecule type" value="Genomic_DNA"/>
</dbReference>
<dbReference type="SMR" id="Q1Q8J2"/>
<dbReference type="STRING" id="335284.Pcryo_2234"/>
<dbReference type="MEROPS" id="S14.001"/>
<dbReference type="KEGG" id="pcr:Pcryo_2234"/>
<dbReference type="eggNOG" id="COG0740">
    <property type="taxonomic scope" value="Bacteria"/>
</dbReference>
<dbReference type="HOGENOM" id="CLU_058707_3_2_6"/>
<dbReference type="Proteomes" id="UP000002425">
    <property type="component" value="Chromosome"/>
</dbReference>
<dbReference type="GO" id="GO:0005737">
    <property type="term" value="C:cytoplasm"/>
    <property type="evidence" value="ECO:0007669"/>
    <property type="project" value="UniProtKB-SubCell"/>
</dbReference>
<dbReference type="GO" id="GO:0009368">
    <property type="term" value="C:endopeptidase Clp complex"/>
    <property type="evidence" value="ECO:0007669"/>
    <property type="project" value="TreeGrafter"/>
</dbReference>
<dbReference type="GO" id="GO:0004176">
    <property type="term" value="F:ATP-dependent peptidase activity"/>
    <property type="evidence" value="ECO:0007669"/>
    <property type="project" value="InterPro"/>
</dbReference>
<dbReference type="GO" id="GO:0051117">
    <property type="term" value="F:ATPase binding"/>
    <property type="evidence" value="ECO:0007669"/>
    <property type="project" value="TreeGrafter"/>
</dbReference>
<dbReference type="GO" id="GO:0004252">
    <property type="term" value="F:serine-type endopeptidase activity"/>
    <property type="evidence" value="ECO:0007669"/>
    <property type="project" value="UniProtKB-UniRule"/>
</dbReference>
<dbReference type="GO" id="GO:0006515">
    <property type="term" value="P:protein quality control for misfolded or incompletely synthesized proteins"/>
    <property type="evidence" value="ECO:0007669"/>
    <property type="project" value="TreeGrafter"/>
</dbReference>
<dbReference type="CDD" id="cd07017">
    <property type="entry name" value="S14_ClpP_2"/>
    <property type="match status" value="1"/>
</dbReference>
<dbReference type="FunFam" id="3.90.226.10:FF:000001">
    <property type="entry name" value="ATP-dependent Clp protease proteolytic subunit"/>
    <property type="match status" value="1"/>
</dbReference>
<dbReference type="Gene3D" id="3.90.226.10">
    <property type="entry name" value="2-enoyl-CoA Hydratase, Chain A, domain 1"/>
    <property type="match status" value="1"/>
</dbReference>
<dbReference type="HAMAP" id="MF_00444">
    <property type="entry name" value="ClpP"/>
    <property type="match status" value="1"/>
</dbReference>
<dbReference type="InterPro" id="IPR001907">
    <property type="entry name" value="ClpP"/>
</dbReference>
<dbReference type="InterPro" id="IPR029045">
    <property type="entry name" value="ClpP/crotonase-like_dom_sf"/>
</dbReference>
<dbReference type="InterPro" id="IPR023562">
    <property type="entry name" value="ClpP/TepA"/>
</dbReference>
<dbReference type="InterPro" id="IPR033135">
    <property type="entry name" value="ClpP_His_AS"/>
</dbReference>
<dbReference type="NCBIfam" id="TIGR00493">
    <property type="entry name" value="clpP"/>
    <property type="match status" value="1"/>
</dbReference>
<dbReference type="NCBIfam" id="NF001368">
    <property type="entry name" value="PRK00277.1"/>
    <property type="match status" value="1"/>
</dbReference>
<dbReference type="NCBIfam" id="NF009205">
    <property type="entry name" value="PRK12553.1"/>
    <property type="match status" value="1"/>
</dbReference>
<dbReference type="PANTHER" id="PTHR10381">
    <property type="entry name" value="ATP-DEPENDENT CLP PROTEASE PROTEOLYTIC SUBUNIT"/>
    <property type="match status" value="1"/>
</dbReference>
<dbReference type="PANTHER" id="PTHR10381:SF11">
    <property type="entry name" value="ATP-DEPENDENT CLP PROTEASE PROTEOLYTIC SUBUNIT, MITOCHONDRIAL"/>
    <property type="match status" value="1"/>
</dbReference>
<dbReference type="Pfam" id="PF00574">
    <property type="entry name" value="CLP_protease"/>
    <property type="match status" value="1"/>
</dbReference>
<dbReference type="PRINTS" id="PR00127">
    <property type="entry name" value="CLPPROTEASEP"/>
</dbReference>
<dbReference type="SUPFAM" id="SSF52096">
    <property type="entry name" value="ClpP/crotonase"/>
    <property type="match status" value="1"/>
</dbReference>
<dbReference type="PROSITE" id="PS00382">
    <property type="entry name" value="CLP_PROTEASE_HIS"/>
    <property type="match status" value="1"/>
</dbReference>
<gene>
    <name evidence="1" type="primary">clpP</name>
    <name type="ordered locus">Pcryo_2234</name>
</gene>
<feature type="chain" id="PRO_0000252830" description="ATP-dependent Clp protease proteolytic subunit">
    <location>
        <begin position="1"/>
        <end position="215"/>
    </location>
</feature>
<feature type="active site" description="Nucleophile" evidence="1">
    <location>
        <position position="116"/>
    </location>
</feature>
<feature type="active site" evidence="1">
    <location>
        <position position="141"/>
    </location>
</feature>
<evidence type="ECO:0000255" key="1">
    <source>
        <dbReference type="HAMAP-Rule" id="MF_00444"/>
    </source>
</evidence>
<evidence type="ECO:0000305" key="2"/>
<comment type="function">
    <text evidence="1">Cleaves peptides in various proteins in a process that requires ATP hydrolysis. Has a chymotrypsin-like activity. Plays a major role in the degradation of misfolded proteins.</text>
</comment>
<comment type="catalytic activity">
    <reaction evidence="1">
        <text>Hydrolysis of proteins to small peptides in the presence of ATP and magnesium. alpha-casein is the usual test substrate. In the absence of ATP, only oligopeptides shorter than five residues are hydrolyzed (such as succinyl-Leu-Tyr-|-NHMec, and Leu-Tyr-Leu-|-Tyr-Trp, in which cleavage of the -Tyr-|-Leu- and -Tyr-|-Trp bonds also occurs).</text>
        <dbReference type="EC" id="3.4.21.92"/>
    </reaction>
</comment>
<comment type="subunit">
    <text evidence="1">Fourteen ClpP subunits assemble into 2 heptameric rings which stack back to back to give a disk-like structure with a central cavity, resembling the structure of eukaryotic proteasomes.</text>
</comment>
<comment type="subcellular location">
    <subcellularLocation>
        <location evidence="1">Cytoplasm</location>
    </subcellularLocation>
</comment>
<comment type="similarity">
    <text evidence="1">Belongs to the peptidase S14 family.</text>
</comment>
<comment type="sequence caution" evidence="2">
    <conflict type="erroneous initiation">
        <sequence resource="EMBL-CDS" id="ABE76011"/>
    </conflict>
</comment>
<name>CLPP_PSYCK</name>
<sequence>MSAHTTAQSAQYNQSATQAALVPMVVEQSARGERSFDIFSRLLRERVIFLTGQVEDHMANLIVAQLLFLEAENPDKDIHLYINSPGGSVSAGLAIFDTMNFIKPEVSTICMGGAYSMGSFLLAAGEKGKRYALANARVMIHQPSGGAQGQATDIEINAREILKTRARLNEILAERTGQPVDKIEKDVERDYWLDAKEAKEYGLIDEVLERRPASL</sequence>
<keyword id="KW-0963">Cytoplasm</keyword>
<keyword id="KW-0378">Hydrolase</keyword>
<keyword id="KW-0645">Protease</keyword>
<keyword id="KW-0720">Serine protease</keyword>